<reference key="1">
    <citation type="journal article" date="2002" name="Proc. Natl. Acad. Sci. U.S.A.">
        <title>Extensive mosaic structure revealed by the complete genome sequence of uropathogenic Escherichia coli.</title>
        <authorList>
            <person name="Welch R.A."/>
            <person name="Burland V."/>
            <person name="Plunkett G. III"/>
            <person name="Redford P."/>
            <person name="Roesch P."/>
            <person name="Rasko D."/>
            <person name="Buckles E.L."/>
            <person name="Liou S.-R."/>
            <person name="Boutin A."/>
            <person name="Hackett J."/>
            <person name="Stroud D."/>
            <person name="Mayhew G.F."/>
            <person name="Rose D.J."/>
            <person name="Zhou S."/>
            <person name="Schwartz D.C."/>
            <person name="Perna N.T."/>
            <person name="Mobley H.L.T."/>
            <person name="Donnenberg M.S."/>
            <person name="Blattner F.R."/>
        </authorList>
    </citation>
    <scope>NUCLEOTIDE SEQUENCE [LARGE SCALE GENOMIC DNA]</scope>
    <source>
        <strain>CFT073 / ATCC 700928 / UPEC</strain>
    </source>
</reference>
<keyword id="KW-0131">Cell cycle</keyword>
<keyword id="KW-0132">Cell division</keyword>
<keyword id="KW-0997">Cell inner membrane</keyword>
<keyword id="KW-1003">Cell membrane</keyword>
<keyword id="KW-0133">Cell shape</keyword>
<keyword id="KW-0472">Membrane</keyword>
<keyword id="KW-1185">Reference proteome</keyword>
<keyword id="KW-0812">Transmembrane</keyword>
<keyword id="KW-1133">Transmembrane helix</keyword>
<accession>P0ADW4</accession>
<accession>P39436</accession>
<proteinExistence type="inferred from homology"/>
<organism>
    <name type="scientific">Escherichia coli O6:H1 (strain CFT073 / ATCC 700928 / UPEC)</name>
    <dbReference type="NCBI Taxonomy" id="199310"/>
    <lineage>
        <taxon>Bacteria</taxon>
        <taxon>Pseudomonadati</taxon>
        <taxon>Pseudomonadota</taxon>
        <taxon>Gammaproteobacteria</taxon>
        <taxon>Enterobacterales</taxon>
        <taxon>Enterobacteriaceae</taxon>
        <taxon>Escherichia</taxon>
    </lineage>
</organism>
<gene>
    <name evidence="1" type="primary">zapG</name>
    <name type="synonym">yhcB</name>
    <name type="ordered locus">c3987</name>
</gene>
<feature type="chain" id="PRO_0000169479" description="Z-ring associated protein G">
    <location>
        <begin position="1"/>
        <end position="132"/>
    </location>
</feature>
<feature type="transmembrane region" description="Helical" evidence="2">
    <location>
        <begin position="1"/>
        <end position="21"/>
    </location>
</feature>
<feature type="region of interest" description="Disordered" evidence="3">
    <location>
        <begin position="95"/>
        <end position="132"/>
    </location>
</feature>
<comment type="function">
    <text evidence="1">Involved in cell division, cell envelope biogenesis and cell shape maintenance.</text>
</comment>
<comment type="subcellular location">
    <subcellularLocation>
        <location evidence="1">Cell inner membrane</location>
        <topology evidence="2">Single-pass membrane protein</topology>
    </subcellularLocation>
</comment>
<comment type="similarity">
    <text evidence="4">Belongs to the ZapG family.</text>
</comment>
<comment type="sequence caution" evidence="4">
    <conflict type="erroneous initiation">
        <sequence resource="EMBL-CDS" id="AAN82427"/>
    </conflict>
</comment>
<dbReference type="EMBL" id="AE014075">
    <property type="protein sequence ID" value="AAN82427.1"/>
    <property type="status" value="ALT_INIT"/>
    <property type="molecule type" value="Genomic_DNA"/>
</dbReference>
<dbReference type="RefSeq" id="WP_001295270.1">
    <property type="nucleotide sequence ID" value="NZ_CP051263.1"/>
</dbReference>
<dbReference type="SMR" id="P0ADW4"/>
<dbReference type="STRING" id="199310.c3987"/>
<dbReference type="GeneID" id="93778753"/>
<dbReference type="KEGG" id="ecc:c3987"/>
<dbReference type="eggNOG" id="COG3105">
    <property type="taxonomic scope" value="Bacteria"/>
</dbReference>
<dbReference type="HOGENOM" id="CLU_135606_1_0_6"/>
<dbReference type="Proteomes" id="UP000001410">
    <property type="component" value="Chromosome"/>
</dbReference>
<dbReference type="GO" id="GO:0005886">
    <property type="term" value="C:plasma membrane"/>
    <property type="evidence" value="ECO:0007669"/>
    <property type="project" value="UniProtKB-SubCell"/>
</dbReference>
<dbReference type="GO" id="GO:0051301">
    <property type="term" value="P:cell division"/>
    <property type="evidence" value="ECO:0007669"/>
    <property type="project" value="UniProtKB-KW"/>
</dbReference>
<dbReference type="GO" id="GO:0008360">
    <property type="term" value="P:regulation of cell shape"/>
    <property type="evidence" value="ECO:0007669"/>
    <property type="project" value="UniProtKB-KW"/>
</dbReference>
<dbReference type="InterPro" id="IPR009386">
    <property type="entry name" value="ZapG-like"/>
</dbReference>
<dbReference type="NCBIfam" id="NF008672">
    <property type="entry name" value="PRK11677.1"/>
    <property type="match status" value="1"/>
</dbReference>
<dbReference type="PANTHER" id="PTHR39579">
    <property type="entry name" value="INNER MEMBRANE PROTEIN YHCB"/>
    <property type="match status" value="1"/>
</dbReference>
<dbReference type="PANTHER" id="PTHR39579:SF1">
    <property type="entry name" value="INNER MEMBRANE PROTEIN YHCB"/>
    <property type="match status" value="1"/>
</dbReference>
<dbReference type="Pfam" id="PF06295">
    <property type="entry name" value="ZapG-like"/>
    <property type="match status" value="1"/>
</dbReference>
<dbReference type="PIRSF" id="PIRSF006318">
    <property type="entry name" value="YhcB"/>
    <property type="match status" value="1"/>
</dbReference>
<name>ZAPG_ECOL6</name>
<protein>
    <recommendedName>
        <fullName evidence="1">Z-ring associated protein G</fullName>
    </recommendedName>
    <alternativeName>
        <fullName evidence="1">Cell division protein ZapG</fullName>
    </alternativeName>
</protein>
<evidence type="ECO:0000250" key="1">
    <source>
        <dbReference type="UniProtKB" id="P0ADW3"/>
    </source>
</evidence>
<evidence type="ECO:0000255" key="2"/>
<evidence type="ECO:0000256" key="3">
    <source>
        <dbReference type="SAM" id="MobiDB-lite"/>
    </source>
</evidence>
<evidence type="ECO:0000305" key="4"/>
<sequence>MTWEYALIGLVVGIIIGAVAMRFGNRKLRQQQALQYELEKNKAELDEYREELVSHFARSAELLDTMAHDYRQLYQHMAKSSSSLLPELSAEANPFRNRLAESEASNDQAPVQMPRDYSEGASGLLRTGAKRD</sequence>